<gene>
    <name evidence="1" type="primary">NA</name>
</gene>
<accession>Q6XV24</accession>
<proteinExistence type="inferred from homology"/>
<name>NRAM_I84A4</name>
<comment type="function">
    <text evidence="1">Catalyzes the removal of terminal sialic acid residues from viral and cellular glycoconjugates. Cleaves off the terminal sialic acids on the glycosylated HA during virus budding to facilitate virus release. Additionally helps virus spread through the circulation by further removing sialic acids from the cell surface. These cleavages prevent self-aggregation and ensure the efficient spread of the progeny virus from cell to cell. Otherwise, infection would be limited to one round of replication. Described as a receptor-destroying enzyme because it cleaves a terminal sialic acid from the cellular receptors. May facilitate viral invasion of the upper airways by cleaving the sialic acid moieties on the mucin of the airway epithelial cells. Likely to plays a role in the budding process through its association with lipid rafts during intracellular transport. May additionally display a raft-association independent effect on budding. Plays a role in the determination of host range restriction on replication and virulence. Sialidase activity in late endosome/lysosome traffic seems to enhance virus replication.</text>
</comment>
<comment type="catalytic activity">
    <reaction evidence="1">
        <text>Hydrolysis of alpha-(2-&gt;3)-, alpha-(2-&gt;6)-, alpha-(2-&gt;8)- glycosidic linkages of terminal sialic acid residues in oligosaccharides, glycoproteins, glycolipids, colominic acid and synthetic substrates.</text>
        <dbReference type="EC" id="3.2.1.18"/>
    </reaction>
</comment>
<comment type="cofactor">
    <cofactor evidence="1">
        <name>Ca(2+)</name>
        <dbReference type="ChEBI" id="CHEBI:29108"/>
    </cofactor>
</comment>
<comment type="activity regulation">
    <text evidence="1">Inhibited by the neuraminidase inhibitors zanamivir (Relenza) and oseltamivir (Tamiflu). These drugs interfere with the release of progeny virus from infected cells and are effective against all influenza strains. Resistance to neuraminidase inhibitors is quite rare.</text>
</comment>
<comment type="subunit">
    <text evidence="1">Homotetramer.</text>
</comment>
<comment type="subcellular location">
    <subcellularLocation>
        <location evidence="1">Virion membrane</location>
    </subcellularLocation>
    <subcellularLocation>
        <location evidence="1">Host apical cell membrane</location>
        <topology evidence="1">Single-pass type II membrane protein</topology>
    </subcellularLocation>
    <text evidence="1">Preferentially accumulates at the apical plasma membrane in infected polarized epithelial cells, which is the virus assembly site. Uses lipid rafts for cell surface transport and apical sorting. In the virion, forms a mushroom-shaped spike on the surface of the membrane.</text>
</comment>
<comment type="domain">
    <text evidence="1">Intact N-terminus is essential for virion morphogenesis. Possesses two apical sorting signals, one in the ectodomain, which is likely to be a glycan, and the other in the transmembrane domain. The transmembrane domain also plays a role in lipid raft association.</text>
</comment>
<comment type="PTM">
    <text evidence="1">N-glycosylated.</text>
</comment>
<comment type="miscellaneous">
    <text>The influenza A genome consist of 8 RNA segments. Genetic variation of hemagglutinin and/or neuraminidase genes results in the emergence of new influenza strains. The mechanism of variation can be the result of point mutations or the result of genetic reassortment between segments of two different strains.</text>
</comment>
<comment type="similarity">
    <text evidence="1">Belongs to the glycosyl hydrolase 34 family.</text>
</comment>
<dbReference type="EC" id="3.2.1.18" evidence="1"/>
<dbReference type="EMBL" id="AY207552">
    <property type="protein sequence ID" value="AAO62066.1"/>
    <property type="molecule type" value="Genomic_DNA"/>
</dbReference>
<dbReference type="SMR" id="Q6XV24"/>
<dbReference type="CAZy" id="GH34">
    <property type="family name" value="Glycoside Hydrolase Family 34"/>
</dbReference>
<dbReference type="GlyCosmos" id="Q6XV24">
    <property type="glycosylation" value="9 sites, No reported glycans"/>
</dbReference>
<dbReference type="GO" id="GO:0020002">
    <property type="term" value="C:host cell plasma membrane"/>
    <property type="evidence" value="ECO:0007669"/>
    <property type="project" value="UniProtKB-SubCell"/>
</dbReference>
<dbReference type="GO" id="GO:0016020">
    <property type="term" value="C:membrane"/>
    <property type="evidence" value="ECO:0007669"/>
    <property type="project" value="UniProtKB-UniRule"/>
</dbReference>
<dbReference type="GO" id="GO:0055036">
    <property type="term" value="C:virion membrane"/>
    <property type="evidence" value="ECO:0007669"/>
    <property type="project" value="UniProtKB-SubCell"/>
</dbReference>
<dbReference type="GO" id="GO:0004308">
    <property type="term" value="F:exo-alpha-sialidase activity"/>
    <property type="evidence" value="ECO:0007669"/>
    <property type="project" value="UniProtKB-UniRule"/>
</dbReference>
<dbReference type="GO" id="GO:0046872">
    <property type="term" value="F:metal ion binding"/>
    <property type="evidence" value="ECO:0007669"/>
    <property type="project" value="UniProtKB-UniRule"/>
</dbReference>
<dbReference type="GO" id="GO:0005975">
    <property type="term" value="P:carbohydrate metabolic process"/>
    <property type="evidence" value="ECO:0007669"/>
    <property type="project" value="InterPro"/>
</dbReference>
<dbReference type="GO" id="GO:0046761">
    <property type="term" value="P:viral budding from plasma membrane"/>
    <property type="evidence" value="ECO:0007669"/>
    <property type="project" value="UniProtKB-UniRule"/>
</dbReference>
<dbReference type="Gene3D" id="2.120.10.10">
    <property type="match status" value="1"/>
</dbReference>
<dbReference type="HAMAP" id="MF_04071">
    <property type="entry name" value="INFV_NRAM"/>
    <property type="match status" value="1"/>
</dbReference>
<dbReference type="InterPro" id="IPR001860">
    <property type="entry name" value="Glyco_hydro_34"/>
</dbReference>
<dbReference type="InterPro" id="IPR036278">
    <property type="entry name" value="Sialidase_sf"/>
</dbReference>
<dbReference type="Pfam" id="PF00064">
    <property type="entry name" value="Neur"/>
    <property type="match status" value="1"/>
</dbReference>
<dbReference type="SUPFAM" id="SSF50939">
    <property type="entry name" value="Sialidases"/>
    <property type="match status" value="1"/>
</dbReference>
<sequence>MNPNQKIICISATGMTLSVVSLLIGIANLGLNIGLHYKVGDTPDAPTPNVNGTNSTTTIINNNTQNNFTNITNIVQNKNEERTFLNLTKPLCEVNSWHILSKDNAIRIGEDAHILVTREPYLSCDPQGCRMFALSQGTTLRGRHANGTIHDRSPFRALISWEMGQAPSPYNVKIECIGWSSTSCHDGISRMSICMSGPNNNASAVVWYGGRPVTEIPSWAGNILRTQESECVCHKGICPVVMTDGPANNKAATKIIYFKEGKIQKIEELTGNAQHIEECSCYGAKEVIKCICRDNWKGANRPVITIDPEMMTHTSKYLCSKVLTDTSRPNDPTSGNCDAPVTGGSPDPGVKGFAFLDGENSWLGRTISKDSRSGYEMLKVPNAETSTQSGPIAHQVIVNNQNWSGYSGAFIDYWANKECFNPCFYVELIRGRPKESSVLWTSNSIVALCGSRERLGSWSWHDGAEIIYFK</sequence>
<organism>
    <name type="scientific">Influenza A virus (strain A/Gull/Astrakhan/227/1984 H13N6)</name>
    <dbReference type="NCBI Taxonomy" id="385603"/>
    <lineage>
        <taxon>Viruses</taxon>
        <taxon>Riboviria</taxon>
        <taxon>Orthornavirae</taxon>
        <taxon>Negarnaviricota</taxon>
        <taxon>Polyploviricotina</taxon>
        <taxon>Insthoviricetes</taxon>
        <taxon>Articulavirales</taxon>
        <taxon>Orthomyxoviridae</taxon>
        <taxon>Alphainfluenzavirus</taxon>
        <taxon>Alphainfluenzavirus influenzae</taxon>
        <taxon>Influenza A virus</taxon>
    </lineage>
</organism>
<feature type="chain" id="PRO_0000280134" description="Neuraminidase">
    <location>
        <begin position="1"/>
        <end position="470"/>
    </location>
</feature>
<feature type="topological domain" description="Intravirion" evidence="1">
    <location>
        <begin position="1"/>
        <end position="6"/>
    </location>
</feature>
<feature type="transmembrane region" description="Helical" evidence="1">
    <location>
        <begin position="7"/>
        <end position="27"/>
    </location>
</feature>
<feature type="topological domain" description="Virion surface" evidence="1">
    <location>
        <begin position="28"/>
        <end position="470"/>
    </location>
</feature>
<feature type="region of interest" description="Involved in apical transport and lipid raft association" evidence="1">
    <location>
        <begin position="11"/>
        <end position="33"/>
    </location>
</feature>
<feature type="region of interest" description="Hypervariable stalk region" evidence="1">
    <location>
        <begin position="36"/>
        <end position="88"/>
    </location>
</feature>
<feature type="region of interest" description="Head of neuraminidase" evidence="1">
    <location>
        <begin position="91"/>
        <end position="470"/>
    </location>
</feature>
<feature type="active site" description="Proton donor/acceptor" evidence="1">
    <location>
        <position position="151"/>
    </location>
</feature>
<feature type="active site" description="Nucleophile" evidence="1">
    <location>
        <position position="406"/>
    </location>
</feature>
<feature type="binding site" evidence="1">
    <location>
        <position position="118"/>
    </location>
    <ligand>
        <name>substrate</name>
    </ligand>
</feature>
<feature type="binding site" evidence="1">
    <location>
        <position position="152"/>
    </location>
    <ligand>
        <name>substrate</name>
    </ligand>
</feature>
<feature type="binding site" evidence="1">
    <location>
        <begin position="277"/>
        <end position="278"/>
    </location>
    <ligand>
        <name>substrate</name>
    </ligand>
</feature>
<feature type="binding site" evidence="1">
    <location>
        <position position="293"/>
    </location>
    <ligand>
        <name>substrate</name>
    </ligand>
</feature>
<feature type="binding site" evidence="1">
    <location>
        <position position="294"/>
    </location>
    <ligand>
        <name>Ca(2+)</name>
        <dbReference type="ChEBI" id="CHEBI:29108"/>
    </ligand>
</feature>
<feature type="binding site" evidence="1">
    <location>
        <position position="298"/>
    </location>
    <ligand>
        <name>Ca(2+)</name>
        <dbReference type="ChEBI" id="CHEBI:29108"/>
    </ligand>
</feature>
<feature type="binding site" evidence="1">
    <location>
        <position position="325"/>
    </location>
    <ligand>
        <name>Ca(2+)</name>
        <dbReference type="ChEBI" id="CHEBI:29108"/>
    </ligand>
</feature>
<feature type="binding site" evidence="1">
    <location>
        <position position="372"/>
    </location>
    <ligand>
        <name>substrate</name>
    </ligand>
</feature>
<feature type="glycosylation site" description="N-linked (GlcNAc...) asparagine; by host" evidence="1">
    <location>
        <position position="51"/>
    </location>
</feature>
<feature type="glycosylation site" description="N-linked (GlcNAc...) asparagine; by host" evidence="1">
    <location>
        <position position="54"/>
    </location>
</feature>
<feature type="glycosylation site" description="N-linked (GlcNAc...) asparagine; by host" evidence="1">
    <location>
        <position position="62"/>
    </location>
</feature>
<feature type="glycosylation site" description="N-linked (GlcNAc...) asparagine; by host" evidence="1">
    <location>
        <position position="67"/>
    </location>
</feature>
<feature type="glycosylation site" description="N-linked (GlcNAc...) asparagine; by host" evidence="1">
    <location>
        <position position="70"/>
    </location>
</feature>
<feature type="glycosylation site" description="N-linked (GlcNAc...) asparagine; by host" evidence="1">
    <location>
        <position position="86"/>
    </location>
</feature>
<feature type="glycosylation site" description="N-linked (GlcNAc...) asparagine; by host" evidence="1">
    <location>
        <position position="146"/>
    </location>
</feature>
<feature type="glycosylation site" description="N-linked (GlcNAc...) asparagine; by host" evidence="1">
    <location>
        <position position="201"/>
    </location>
</feature>
<feature type="glycosylation site" description="N-linked (GlcNAc...) asparagine; by host" evidence="1">
    <location>
        <position position="402"/>
    </location>
</feature>
<feature type="disulfide bond" evidence="1">
    <location>
        <begin position="92"/>
        <end position="419"/>
    </location>
</feature>
<feature type="disulfide bond" evidence="1">
    <location>
        <begin position="124"/>
        <end position="129"/>
    </location>
</feature>
<feature type="disulfide bond" evidence="1">
    <location>
        <begin position="184"/>
        <end position="231"/>
    </location>
</feature>
<feature type="disulfide bond" evidence="1">
    <location>
        <begin position="233"/>
        <end position="238"/>
    </location>
</feature>
<feature type="disulfide bond" evidence="1">
    <location>
        <begin position="279"/>
        <end position="292"/>
    </location>
</feature>
<feature type="disulfide bond" evidence="1">
    <location>
        <begin position="281"/>
        <end position="290"/>
    </location>
</feature>
<feature type="disulfide bond" evidence="1">
    <location>
        <begin position="319"/>
        <end position="337"/>
    </location>
</feature>
<feature type="disulfide bond" evidence="1">
    <location>
        <begin position="423"/>
        <end position="449"/>
    </location>
</feature>
<evidence type="ECO:0000255" key="1">
    <source>
        <dbReference type="HAMAP-Rule" id="MF_04071"/>
    </source>
</evidence>
<keyword id="KW-0106">Calcium</keyword>
<keyword id="KW-1015">Disulfide bond</keyword>
<keyword id="KW-0325">Glycoprotein</keyword>
<keyword id="KW-0326">Glycosidase</keyword>
<keyword id="KW-1032">Host cell membrane</keyword>
<keyword id="KW-1043">Host membrane</keyword>
<keyword id="KW-0378">Hydrolase</keyword>
<keyword id="KW-0472">Membrane</keyword>
<keyword id="KW-0479">Metal-binding</keyword>
<keyword id="KW-0735">Signal-anchor</keyword>
<keyword id="KW-0812">Transmembrane</keyword>
<keyword id="KW-1133">Transmembrane helix</keyword>
<keyword id="KW-0946">Virion</keyword>
<organismHost>
    <name type="scientific">Aves</name>
    <dbReference type="NCBI Taxonomy" id="8782"/>
</organismHost>
<protein>
    <recommendedName>
        <fullName evidence="1">Neuraminidase</fullName>
        <ecNumber evidence="1">3.2.1.18</ecNumber>
    </recommendedName>
</protein>
<reference key="1">
    <citation type="submission" date="2002-12" db="EMBL/GenBank/DDBJ databases">
        <title>Genetic analysis of multiple N3, N4, and N6 influenza A virus neuraminidase genes.</title>
        <authorList>
            <person name="Webby R.J."/>
            <person name="Humberd J.L."/>
            <person name="Krauss S.L."/>
        </authorList>
    </citation>
    <scope>NUCLEOTIDE SEQUENCE [GENOMIC RNA]</scope>
</reference>
<reference key="2">
    <citation type="journal article" date="2004" name="Virus Res.">
        <title>Assembly and budding of influenza virus.</title>
        <authorList>
            <person name="Nayak D.P."/>
            <person name="Hui E.K."/>
            <person name="Barman S."/>
        </authorList>
    </citation>
    <scope>REVIEW</scope>
</reference>
<reference key="3">
    <citation type="journal article" date="2005" name="N. Engl. J. Med.">
        <title>Neuraminidase inhibitors for influenza.</title>
        <authorList>
            <person name="Moscona A."/>
        </authorList>
    </citation>
    <scope>REVIEW</scope>
</reference>
<reference key="4">
    <citation type="journal article" date="2005" name="Biol. Pharm. Bull.">
        <title>Sialobiology of influenza: molecular mechanism of host range variation of influenza viruses.</title>
        <authorList>
            <person name="Suzuki Y."/>
        </authorList>
    </citation>
    <scope>REVIEW</scope>
</reference>